<comment type="function">
    <text evidence="1">Catalyzes the specific phosphorylation of arginine residues in a large number of proteins. Is part of the bacterial stress response system. Protein arginine phosphorylation has a physiologically important role and is involved in the regulation of many critical cellular processes, such as protein homeostasis, motility, competence, and stringent and stress responses, by regulating gene expression and protein activity.</text>
</comment>
<comment type="catalytic activity">
    <reaction evidence="1">
        <text>L-arginyl-[protein] + ATP = N(omega)-phospho-L-arginyl-[protein] + ADP + H(+)</text>
        <dbReference type="Rhea" id="RHEA:43384"/>
        <dbReference type="Rhea" id="RHEA-COMP:10532"/>
        <dbReference type="Rhea" id="RHEA-COMP:10533"/>
        <dbReference type="ChEBI" id="CHEBI:15378"/>
        <dbReference type="ChEBI" id="CHEBI:29965"/>
        <dbReference type="ChEBI" id="CHEBI:30616"/>
        <dbReference type="ChEBI" id="CHEBI:83226"/>
        <dbReference type="ChEBI" id="CHEBI:456216"/>
        <dbReference type="EC" id="2.7.14.1"/>
    </reaction>
</comment>
<comment type="activity regulation">
    <text evidence="1">Appears to be allosterically activated by the binding of pArg-containing polypeptides to the pArg-binding pocket localized in the C-terminal domain of McsB.</text>
</comment>
<comment type="similarity">
    <text evidence="1">Belongs to the ATP:guanido phosphotransferase family.</text>
</comment>
<feature type="chain" id="PRO_1000130106" description="Protein-arginine kinase">
    <location>
        <begin position="1"/>
        <end position="354"/>
    </location>
</feature>
<feature type="domain" description="Phosphagen kinase C-terminal" evidence="1">
    <location>
        <begin position="24"/>
        <end position="254"/>
    </location>
</feature>
<feature type="short sequence motif" description="RDXXRA motif of the pArg binding pocket involved in allosteric regulation" evidence="1">
    <location>
        <begin position="337"/>
        <end position="342"/>
    </location>
</feature>
<feature type="binding site" evidence="1">
    <location>
        <begin position="27"/>
        <end position="31"/>
    </location>
    <ligand>
        <name>ATP</name>
        <dbReference type="ChEBI" id="CHEBI:30616"/>
    </ligand>
</feature>
<feature type="binding site" evidence="1">
    <location>
        <position position="92"/>
    </location>
    <ligand>
        <name>ATP</name>
        <dbReference type="ChEBI" id="CHEBI:30616"/>
    </ligand>
</feature>
<feature type="binding site" evidence="1">
    <location>
        <position position="125"/>
    </location>
    <ligand>
        <name>ATP</name>
        <dbReference type="ChEBI" id="CHEBI:30616"/>
    </ligand>
</feature>
<feature type="binding site" evidence="1">
    <location>
        <begin position="176"/>
        <end position="180"/>
    </location>
    <ligand>
        <name>ATP</name>
        <dbReference type="ChEBI" id="CHEBI:30616"/>
    </ligand>
</feature>
<feature type="binding site" evidence="1">
    <location>
        <begin position="207"/>
        <end position="212"/>
    </location>
    <ligand>
        <name>ATP</name>
        <dbReference type="ChEBI" id="CHEBI:30616"/>
    </ligand>
</feature>
<dbReference type="EC" id="2.7.14.1" evidence="1"/>
<dbReference type="EMBL" id="CP001283">
    <property type="protein sequence ID" value="ACK91649.1"/>
    <property type="molecule type" value="Genomic_DNA"/>
</dbReference>
<dbReference type="RefSeq" id="WP_000050832.1">
    <property type="nucleotide sequence ID" value="NC_011773.1"/>
</dbReference>
<dbReference type="SMR" id="B7JK87"/>
<dbReference type="KEGG" id="bcu:BCAH820_0090"/>
<dbReference type="HOGENOM" id="CLU_066591_1_0_9"/>
<dbReference type="Proteomes" id="UP000001363">
    <property type="component" value="Chromosome"/>
</dbReference>
<dbReference type="GO" id="GO:0005615">
    <property type="term" value="C:extracellular space"/>
    <property type="evidence" value="ECO:0007669"/>
    <property type="project" value="TreeGrafter"/>
</dbReference>
<dbReference type="GO" id="GO:0005524">
    <property type="term" value="F:ATP binding"/>
    <property type="evidence" value="ECO:0007669"/>
    <property type="project" value="UniProtKB-KW"/>
</dbReference>
<dbReference type="GO" id="GO:0004111">
    <property type="term" value="F:creatine kinase activity"/>
    <property type="evidence" value="ECO:0007669"/>
    <property type="project" value="InterPro"/>
</dbReference>
<dbReference type="GO" id="GO:0004672">
    <property type="term" value="F:protein kinase activity"/>
    <property type="evidence" value="ECO:0007669"/>
    <property type="project" value="UniProtKB-UniRule"/>
</dbReference>
<dbReference type="GO" id="GO:0046314">
    <property type="term" value="P:phosphocreatine biosynthetic process"/>
    <property type="evidence" value="ECO:0007669"/>
    <property type="project" value="InterPro"/>
</dbReference>
<dbReference type="CDD" id="cd07930">
    <property type="entry name" value="bacterial_phosphagen_kinase"/>
    <property type="match status" value="1"/>
</dbReference>
<dbReference type="FunFam" id="3.30.590.10:FF:000007">
    <property type="entry name" value="Protein-arginine kinase"/>
    <property type="match status" value="1"/>
</dbReference>
<dbReference type="Gene3D" id="3.30.590.10">
    <property type="entry name" value="Glutamine synthetase/guanido kinase, catalytic domain"/>
    <property type="match status" value="1"/>
</dbReference>
<dbReference type="HAMAP" id="MF_00602">
    <property type="entry name" value="Prot_Arg_kinase"/>
    <property type="match status" value="1"/>
</dbReference>
<dbReference type="InterPro" id="IPR023660">
    <property type="entry name" value="Arg_Kinase"/>
</dbReference>
<dbReference type="InterPro" id="IPR000749">
    <property type="entry name" value="ATP-guanido_PTrfase"/>
</dbReference>
<dbReference type="InterPro" id="IPR022415">
    <property type="entry name" value="ATP-guanido_PTrfase_AS"/>
</dbReference>
<dbReference type="InterPro" id="IPR022414">
    <property type="entry name" value="ATP-guanido_PTrfase_cat"/>
</dbReference>
<dbReference type="InterPro" id="IPR014746">
    <property type="entry name" value="Gln_synth/guanido_kin_cat_dom"/>
</dbReference>
<dbReference type="NCBIfam" id="NF002194">
    <property type="entry name" value="PRK01059.1-4"/>
    <property type="match status" value="1"/>
</dbReference>
<dbReference type="NCBIfam" id="NF002195">
    <property type="entry name" value="PRK01059.1-5"/>
    <property type="match status" value="1"/>
</dbReference>
<dbReference type="PANTHER" id="PTHR11547:SF38">
    <property type="entry name" value="ARGININE KINASE 1-RELATED"/>
    <property type="match status" value="1"/>
</dbReference>
<dbReference type="PANTHER" id="PTHR11547">
    <property type="entry name" value="ARGININE OR CREATINE KINASE"/>
    <property type="match status" value="1"/>
</dbReference>
<dbReference type="Pfam" id="PF00217">
    <property type="entry name" value="ATP-gua_Ptrans"/>
    <property type="match status" value="1"/>
</dbReference>
<dbReference type="SUPFAM" id="SSF55931">
    <property type="entry name" value="Glutamine synthetase/guanido kinase"/>
    <property type="match status" value="1"/>
</dbReference>
<dbReference type="PROSITE" id="PS00112">
    <property type="entry name" value="PHOSPHAGEN_KINASE"/>
    <property type="match status" value="1"/>
</dbReference>
<dbReference type="PROSITE" id="PS51510">
    <property type="entry name" value="PHOSPHAGEN_KINASE_C"/>
    <property type="match status" value="1"/>
</dbReference>
<accession>B7JK87</accession>
<protein>
    <recommendedName>
        <fullName evidence="1">Protein-arginine kinase</fullName>
        <ecNumber evidence="1">2.7.14.1</ecNumber>
    </recommendedName>
</protein>
<keyword id="KW-0021">Allosteric enzyme</keyword>
<keyword id="KW-0067">ATP-binding</keyword>
<keyword id="KW-0418">Kinase</keyword>
<keyword id="KW-0547">Nucleotide-binding</keyword>
<keyword id="KW-0808">Transferase</keyword>
<evidence type="ECO:0000255" key="1">
    <source>
        <dbReference type="HAMAP-Rule" id="MF_00602"/>
    </source>
</evidence>
<name>MCSB_BACC0</name>
<reference key="1">
    <citation type="submission" date="2008-10" db="EMBL/GenBank/DDBJ databases">
        <title>Genome sequence of Bacillus cereus AH820.</title>
        <authorList>
            <person name="Dodson R.J."/>
            <person name="Durkin A.S."/>
            <person name="Rosovitz M.J."/>
            <person name="Rasko D.A."/>
            <person name="Hoffmaster A."/>
            <person name="Ravel J."/>
            <person name="Sutton G."/>
        </authorList>
    </citation>
    <scope>NUCLEOTIDE SEQUENCE [LARGE SCALE GENOMIC DNA]</scope>
    <source>
        <strain>AH820</strain>
    </source>
</reference>
<organism>
    <name type="scientific">Bacillus cereus (strain AH820)</name>
    <dbReference type="NCBI Taxonomy" id="405535"/>
    <lineage>
        <taxon>Bacteria</taxon>
        <taxon>Bacillati</taxon>
        <taxon>Bacillota</taxon>
        <taxon>Bacilli</taxon>
        <taxon>Bacillales</taxon>
        <taxon>Bacillaceae</taxon>
        <taxon>Bacillus</taxon>
        <taxon>Bacillus cereus group</taxon>
    </lineage>
</organism>
<proteinExistence type="inferred from homology"/>
<gene>
    <name evidence="1" type="primary">mcsB</name>
    <name type="ordered locus">BCAH820_0090</name>
</gene>
<sequence>MSLDKIMNEAISPWMKGDGPDSDIVLSSRIRLARNFKKYQFSTMQNEEETKQIQELFKKEFINKTVEPFGEFELLKMNELTPLQRRVLVEKHLISPNLAGTEYGACLLSESEHISVMLNEEDHIRIQCLFSGLQLSEALQSANQIDNWIEKEVEYAFDESLGYITSCPTNVGTGLRASVMIHLPGLVLTKRISRIIQVIQKLGLVVRGIYGEGSEALGNIFQVSNQMTLGKSEEDIIADLKSVIQQIIQQEKMARELIVQNSSIELEDKVYRSYGILANSRLIQSAEAANCLSDLRLGIDLGYIQGISRNILTELMVLTQPGILQQYAGGPLGPEERDYRRATLIRERLRIEKN</sequence>